<keyword id="KW-0963">Cytoplasm</keyword>
<keyword id="KW-0342">GTP-binding</keyword>
<keyword id="KW-0436">Ligase</keyword>
<keyword id="KW-0460">Magnesium</keyword>
<keyword id="KW-0479">Metal-binding</keyword>
<keyword id="KW-0547">Nucleotide-binding</keyword>
<keyword id="KW-0658">Purine biosynthesis</keyword>
<feature type="chain" id="PRO_0000224330" description="Adenylosuccinate synthetase">
    <location>
        <begin position="1"/>
        <end position="427"/>
    </location>
</feature>
<feature type="active site" description="Proton acceptor" evidence="1">
    <location>
        <position position="13"/>
    </location>
</feature>
<feature type="active site" description="Proton donor" evidence="1">
    <location>
        <position position="41"/>
    </location>
</feature>
<feature type="binding site" evidence="1">
    <location>
        <begin position="12"/>
        <end position="18"/>
    </location>
    <ligand>
        <name>GTP</name>
        <dbReference type="ChEBI" id="CHEBI:37565"/>
    </ligand>
</feature>
<feature type="binding site" description="in other chain" evidence="1">
    <location>
        <begin position="13"/>
        <end position="16"/>
    </location>
    <ligand>
        <name>IMP</name>
        <dbReference type="ChEBI" id="CHEBI:58053"/>
        <note>ligand shared between dimeric partners</note>
    </ligand>
</feature>
<feature type="binding site" evidence="1">
    <location>
        <position position="13"/>
    </location>
    <ligand>
        <name>Mg(2+)</name>
        <dbReference type="ChEBI" id="CHEBI:18420"/>
    </ligand>
</feature>
<feature type="binding site" description="in other chain" evidence="1">
    <location>
        <begin position="38"/>
        <end position="41"/>
    </location>
    <ligand>
        <name>IMP</name>
        <dbReference type="ChEBI" id="CHEBI:58053"/>
        <note>ligand shared between dimeric partners</note>
    </ligand>
</feature>
<feature type="binding site" evidence="1">
    <location>
        <begin position="40"/>
        <end position="42"/>
    </location>
    <ligand>
        <name>GTP</name>
        <dbReference type="ChEBI" id="CHEBI:37565"/>
    </ligand>
</feature>
<feature type="binding site" evidence="1">
    <location>
        <position position="40"/>
    </location>
    <ligand>
        <name>Mg(2+)</name>
        <dbReference type="ChEBI" id="CHEBI:18420"/>
    </ligand>
</feature>
<feature type="binding site" description="in other chain" evidence="1">
    <location>
        <position position="128"/>
    </location>
    <ligand>
        <name>IMP</name>
        <dbReference type="ChEBI" id="CHEBI:58053"/>
        <note>ligand shared between dimeric partners</note>
    </ligand>
</feature>
<feature type="binding site" evidence="1">
    <location>
        <position position="142"/>
    </location>
    <ligand>
        <name>IMP</name>
        <dbReference type="ChEBI" id="CHEBI:58053"/>
        <note>ligand shared between dimeric partners</note>
    </ligand>
</feature>
<feature type="binding site" description="in other chain" evidence="1">
    <location>
        <position position="223"/>
    </location>
    <ligand>
        <name>IMP</name>
        <dbReference type="ChEBI" id="CHEBI:58053"/>
        <note>ligand shared between dimeric partners</note>
    </ligand>
</feature>
<feature type="binding site" description="in other chain" evidence="1">
    <location>
        <position position="238"/>
    </location>
    <ligand>
        <name>IMP</name>
        <dbReference type="ChEBI" id="CHEBI:58053"/>
        <note>ligand shared between dimeric partners</note>
    </ligand>
</feature>
<feature type="binding site" evidence="1">
    <location>
        <begin position="298"/>
        <end position="304"/>
    </location>
    <ligand>
        <name>substrate</name>
    </ligand>
</feature>
<feature type="binding site" description="in other chain" evidence="1">
    <location>
        <position position="302"/>
    </location>
    <ligand>
        <name>IMP</name>
        <dbReference type="ChEBI" id="CHEBI:58053"/>
        <note>ligand shared between dimeric partners</note>
    </ligand>
</feature>
<feature type="binding site" evidence="1">
    <location>
        <position position="304"/>
    </location>
    <ligand>
        <name>GTP</name>
        <dbReference type="ChEBI" id="CHEBI:37565"/>
    </ligand>
</feature>
<feature type="binding site" evidence="1">
    <location>
        <begin position="330"/>
        <end position="332"/>
    </location>
    <ligand>
        <name>GTP</name>
        <dbReference type="ChEBI" id="CHEBI:37565"/>
    </ligand>
</feature>
<feature type="binding site" evidence="1">
    <location>
        <begin position="412"/>
        <end position="414"/>
    </location>
    <ligand>
        <name>GTP</name>
        <dbReference type="ChEBI" id="CHEBI:37565"/>
    </ligand>
</feature>
<accession>Q47KH7</accession>
<comment type="function">
    <text evidence="1">Plays an important role in the de novo pathway of purine nucleotide biosynthesis. Catalyzes the first committed step in the biosynthesis of AMP from IMP.</text>
</comment>
<comment type="catalytic activity">
    <reaction evidence="1">
        <text>IMP + L-aspartate + GTP = N(6)-(1,2-dicarboxyethyl)-AMP + GDP + phosphate + 2 H(+)</text>
        <dbReference type="Rhea" id="RHEA:15753"/>
        <dbReference type="ChEBI" id="CHEBI:15378"/>
        <dbReference type="ChEBI" id="CHEBI:29991"/>
        <dbReference type="ChEBI" id="CHEBI:37565"/>
        <dbReference type="ChEBI" id="CHEBI:43474"/>
        <dbReference type="ChEBI" id="CHEBI:57567"/>
        <dbReference type="ChEBI" id="CHEBI:58053"/>
        <dbReference type="ChEBI" id="CHEBI:58189"/>
        <dbReference type="EC" id="6.3.4.4"/>
    </reaction>
</comment>
<comment type="cofactor">
    <cofactor evidence="1">
        <name>Mg(2+)</name>
        <dbReference type="ChEBI" id="CHEBI:18420"/>
    </cofactor>
    <text evidence="1">Binds 1 Mg(2+) ion per subunit.</text>
</comment>
<comment type="pathway">
    <text evidence="1">Purine metabolism; AMP biosynthesis via de novo pathway; AMP from IMP: step 1/2.</text>
</comment>
<comment type="subunit">
    <text evidence="1">Homodimer.</text>
</comment>
<comment type="subcellular location">
    <subcellularLocation>
        <location evidence="1">Cytoplasm</location>
    </subcellularLocation>
</comment>
<comment type="similarity">
    <text evidence="1">Belongs to the adenylosuccinate synthetase family.</text>
</comment>
<organism>
    <name type="scientific">Thermobifida fusca (strain YX)</name>
    <dbReference type="NCBI Taxonomy" id="269800"/>
    <lineage>
        <taxon>Bacteria</taxon>
        <taxon>Bacillati</taxon>
        <taxon>Actinomycetota</taxon>
        <taxon>Actinomycetes</taxon>
        <taxon>Streptosporangiales</taxon>
        <taxon>Nocardiopsidaceae</taxon>
        <taxon>Thermobifida</taxon>
    </lineage>
</organism>
<evidence type="ECO:0000255" key="1">
    <source>
        <dbReference type="HAMAP-Rule" id="MF_00011"/>
    </source>
</evidence>
<gene>
    <name evidence="1" type="primary">purA</name>
    <name type="ordered locus">Tfu_3012</name>
</gene>
<proteinExistence type="inferred from homology"/>
<protein>
    <recommendedName>
        <fullName evidence="1">Adenylosuccinate synthetase</fullName>
        <shortName evidence="1">AMPSase</shortName>
        <shortName evidence="1">AdSS</shortName>
        <ecNumber evidence="1">6.3.4.4</ecNumber>
    </recommendedName>
    <alternativeName>
        <fullName evidence="1">IMP--aspartate ligase</fullName>
    </alternativeName>
</protein>
<sequence>MPAIALVGAQWGDEGKGKATDLVGDRVDYVVRYQGGNNAGHTVVIGDQEYALHLLPSGILTPGVIPVIANGVVIDPAVLFEELDALTARGVDVSRLLISANAHLIMPYHRALDKVSERFLGKGRIGTTGRGIGPTYADKTARAGVRVQDMFDPKILRKKLELALNDKNQILTKVYNRRALEVDRILDEYLGYAEKIRPYVVDTSLVLNRALDEGKTVFLEGSQGTLLDIDHGTYPFVTSSSPTAGGACSGSGIGPTRITKVIGILKAYTTRVGSGPFPTELEDEWGEWLRSRGHEYGTTTGRNRRCGWFDAPIARYATRINGITDFFLTKLDVLSGLERIPVCVAYDIDGVRHDEIPMTQTEFHHATPIYEYLDGWNEDISQARSFDDLPKNAQAYVRAIEEMSGAPISAIGVGPGREQTLELRPLV</sequence>
<name>PURA_THEFY</name>
<reference key="1">
    <citation type="journal article" date="2007" name="J. Bacteriol.">
        <title>Genome sequence and analysis of the soil cellulolytic actinomycete Thermobifida fusca YX.</title>
        <authorList>
            <person name="Lykidis A."/>
            <person name="Mavromatis K."/>
            <person name="Ivanova N."/>
            <person name="Anderson I."/>
            <person name="Land M."/>
            <person name="DiBartolo G."/>
            <person name="Martinez M."/>
            <person name="Lapidus A."/>
            <person name="Lucas S."/>
            <person name="Copeland A."/>
            <person name="Richardson P."/>
            <person name="Wilson D.B."/>
            <person name="Kyrpides N."/>
        </authorList>
    </citation>
    <scope>NUCLEOTIDE SEQUENCE [LARGE SCALE GENOMIC DNA]</scope>
    <source>
        <strain>YX</strain>
    </source>
</reference>
<dbReference type="EC" id="6.3.4.4" evidence="1"/>
<dbReference type="EMBL" id="CP000088">
    <property type="protein sequence ID" value="AAZ57045.1"/>
    <property type="molecule type" value="Genomic_DNA"/>
</dbReference>
<dbReference type="RefSeq" id="WP_011293429.1">
    <property type="nucleotide sequence ID" value="NC_007333.1"/>
</dbReference>
<dbReference type="SMR" id="Q47KH7"/>
<dbReference type="STRING" id="269800.Tfu_3012"/>
<dbReference type="KEGG" id="tfu:Tfu_3012"/>
<dbReference type="eggNOG" id="COG0104">
    <property type="taxonomic scope" value="Bacteria"/>
</dbReference>
<dbReference type="HOGENOM" id="CLU_029848_0_0_11"/>
<dbReference type="OrthoDB" id="9807553at2"/>
<dbReference type="UniPathway" id="UPA00075">
    <property type="reaction ID" value="UER00335"/>
</dbReference>
<dbReference type="GO" id="GO:0005737">
    <property type="term" value="C:cytoplasm"/>
    <property type="evidence" value="ECO:0007669"/>
    <property type="project" value="UniProtKB-SubCell"/>
</dbReference>
<dbReference type="GO" id="GO:0004019">
    <property type="term" value="F:adenylosuccinate synthase activity"/>
    <property type="evidence" value="ECO:0007669"/>
    <property type="project" value="UniProtKB-UniRule"/>
</dbReference>
<dbReference type="GO" id="GO:0005525">
    <property type="term" value="F:GTP binding"/>
    <property type="evidence" value="ECO:0007669"/>
    <property type="project" value="UniProtKB-UniRule"/>
</dbReference>
<dbReference type="GO" id="GO:0000287">
    <property type="term" value="F:magnesium ion binding"/>
    <property type="evidence" value="ECO:0007669"/>
    <property type="project" value="UniProtKB-UniRule"/>
</dbReference>
<dbReference type="GO" id="GO:0044208">
    <property type="term" value="P:'de novo' AMP biosynthetic process"/>
    <property type="evidence" value="ECO:0007669"/>
    <property type="project" value="UniProtKB-UniRule"/>
</dbReference>
<dbReference type="GO" id="GO:0046040">
    <property type="term" value="P:IMP metabolic process"/>
    <property type="evidence" value="ECO:0007669"/>
    <property type="project" value="TreeGrafter"/>
</dbReference>
<dbReference type="CDD" id="cd03108">
    <property type="entry name" value="AdSS"/>
    <property type="match status" value="1"/>
</dbReference>
<dbReference type="FunFam" id="1.10.300.10:FF:000001">
    <property type="entry name" value="Adenylosuccinate synthetase"/>
    <property type="match status" value="1"/>
</dbReference>
<dbReference type="FunFam" id="3.90.170.10:FF:000001">
    <property type="entry name" value="Adenylosuccinate synthetase"/>
    <property type="match status" value="1"/>
</dbReference>
<dbReference type="Gene3D" id="3.40.440.10">
    <property type="entry name" value="Adenylosuccinate Synthetase, subunit A, domain 1"/>
    <property type="match status" value="1"/>
</dbReference>
<dbReference type="Gene3D" id="1.10.300.10">
    <property type="entry name" value="Adenylosuccinate Synthetase, subunit A, domain 2"/>
    <property type="match status" value="1"/>
</dbReference>
<dbReference type="Gene3D" id="3.90.170.10">
    <property type="entry name" value="Adenylosuccinate Synthetase, subunit A, domain 3"/>
    <property type="match status" value="1"/>
</dbReference>
<dbReference type="HAMAP" id="MF_00011">
    <property type="entry name" value="Adenylosucc_synth"/>
    <property type="match status" value="1"/>
</dbReference>
<dbReference type="InterPro" id="IPR018220">
    <property type="entry name" value="Adenylosuccin_syn_GTP-bd"/>
</dbReference>
<dbReference type="InterPro" id="IPR033128">
    <property type="entry name" value="Adenylosuccin_syn_Lys_AS"/>
</dbReference>
<dbReference type="InterPro" id="IPR042109">
    <property type="entry name" value="Adenylosuccinate_synth_dom1"/>
</dbReference>
<dbReference type="InterPro" id="IPR042110">
    <property type="entry name" value="Adenylosuccinate_synth_dom2"/>
</dbReference>
<dbReference type="InterPro" id="IPR042111">
    <property type="entry name" value="Adenylosuccinate_synth_dom3"/>
</dbReference>
<dbReference type="InterPro" id="IPR001114">
    <property type="entry name" value="Adenylosuccinate_synthetase"/>
</dbReference>
<dbReference type="InterPro" id="IPR027417">
    <property type="entry name" value="P-loop_NTPase"/>
</dbReference>
<dbReference type="NCBIfam" id="NF002223">
    <property type="entry name" value="PRK01117.1"/>
    <property type="match status" value="1"/>
</dbReference>
<dbReference type="NCBIfam" id="TIGR00184">
    <property type="entry name" value="purA"/>
    <property type="match status" value="1"/>
</dbReference>
<dbReference type="PANTHER" id="PTHR11846">
    <property type="entry name" value="ADENYLOSUCCINATE SYNTHETASE"/>
    <property type="match status" value="1"/>
</dbReference>
<dbReference type="PANTHER" id="PTHR11846:SF0">
    <property type="entry name" value="ADENYLOSUCCINATE SYNTHETASE"/>
    <property type="match status" value="1"/>
</dbReference>
<dbReference type="Pfam" id="PF00709">
    <property type="entry name" value="Adenylsucc_synt"/>
    <property type="match status" value="1"/>
</dbReference>
<dbReference type="SMART" id="SM00788">
    <property type="entry name" value="Adenylsucc_synt"/>
    <property type="match status" value="1"/>
</dbReference>
<dbReference type="SUPFAM" id="SSF52540">
    <property type="entry name" value="P-loop containing nucleoside triphosphate hydrolases"/>
    <property type="match status" value="1"/>
</dbReference>
<dbReference type="PROSITE" id="PS01266">
    <property type="entry name" value="ADENYLOSUCCIN_SYN_1"/>
    <property type="match status" value="1"/>
</dbReference>
<dbReference type="PROSITE" id="PS00513">
    <property type="entry name" value="ADENYLOSUCCIN_SYN_2"/>
    <property type="match status" value="1"/>
</dbReference>